<protein>
    <recommendedName>
        <fullName evidence="1">Glutaminase</fullName>
        <ecNumber evidence="1">3.5.1.2</ecNumber>
    </recommendedName>
</protein>
<proteinExistence type="inferred from homology"/>
<reference key="1">
    <citation type="journal article" date="2002" name="Nat. Biotechnol.">
        <title>Genome sequence of the dissimilatory metal ion-reducing bacterium Shewanella oneidensis.</title>
        <authorList>
            <person name="Heidelberg J.F."/>
            <person name="Paulsen I.T."/>
            <person name="Nelson K.E."/>
            <person name="Gaidos E.J."/>
            <person name="Nelson W.C."/>
            <person name="Read T.D."/>
            <person name="Eisen J.A."/>
            <person name="Seshadri R."/>
            <person name="Ward N.L."/>
            <person name="Methe B.A."/>
            <person name="Clayton R.A."/>
            <person name="Meyer T."/>
            <person name="Tsapin A."/>
            <person name="Scott J."/>
            <person name="Beanan M.J."/>
            <person name="Brinkac L.M."/>
            <person name="Daugherty S.C."/>
            <person name="DeBoy R.T."/>
            <person name="Dodson R.J."/>
            <person name="Durkin A.S."/>
            <person name="Haft D.H."/>
            <person name="Kolonay J.F."/>
            <person name="Madupu R."/>
            <person name="Peterson J.D."/>
            <person name="Umayam L.A."/>
            <person name="White O."/>
            <person name="Wolf A.M."/>
            <person name="Vamathevan J.J."/>
            <person name="Weidman J.F."/>
            <person name="Impraim M."/>
            <person name="Lee K."/>
            <person name="Berry K.J."/>
            <person name="Lee C."/>
            <person name="Mueller J."/>
            <person name="Khouri H.M."/>
            <person name="Gill J."/>
            <person name="Utterback T.R."/>
            <person name="McDonald L.A."/>
            <person name="Feldblyum T.V."/>
            <person name="Smith H.O."/>
            <person name="Venter J.C."/>
            <person name="Nealson K.H."/>
            <person name="Fraser C.M."/>
        </authorList>
    </citation>
    <scope>NUCLEOTIDE SEQUENCE [LARGE SCALE GENOMIC DNA]</scope>
    <source>
        <strain>ATCC 700550 / JCM 31522 / CIP 106686 / LMG 19005 / NCIMB 14063 / MR-1</strain>
    </source>
</reference>
<name>GLSA_SHEON</name>
<evidence type="ECO:0000255" key="1">
    <source>
        <dbReference type="HAMAP-Rule" id="MF_00313"/>
    </source>
</evidence>
<organism>
    <name type="scientific">Shewanella oneidensis (strain ATCC 700550 / JCM 31522 / CIP 106686 / LMG 19005 / NCIMB 14063 / MR-1)</name>
    <dbReference type="NCBI Taxonomy" id="211586"/>
    <lineage>
        <taxon>Bacteria</taxon>
        <taxon>Pseudomonadati</taxon>
        <taxon>Pseudomonadota</taxon>
        <taxon>Gammaproteobacteria</taxon>
        <taxon>Alteromonadales</taxon>
        <taxon>Shewanellaceae</taxon>
        <taxon>Shewanella</taxon>
    </lineage>
</organism>
<accession>Q8EBY0</accession>
<gene>
    <name evidence="1" type="primary">glsA</name>
    <name type="ordered locus">SO_3365</name>
</gene>
<dbReference type="EC" id="3.5.1.2" evidence="1"/>
<dbReference type="EMBL" id="AE014299">
    <property type="protein sequence ID" value="AAN56363.1"/>
    <property type="molecule type" value="Genomic_DNA"/>
</dbReference>
<dbReference type="RefSeq" id="NP_718919.1">
    <property type="nucleotide sequence ID" value="NC_004347.2"/>
</dbReference>
<dbReference type="RefSeq" id="WP_011073233.1">
    <property type="nucleotide sequence ID" value="NC_004347.2"/>
</dbReference>
<dbReference type="SMR" id="Q8EBY0"/>
<dbReference type="STRING" id="211586.SO_3365"/>
<dbReference type="PaxDb" id="211586-SO_3365"/>
<dbReference type="KEGG" id="son:SO_3365"/>
<dbReference type="PATRIC" id="fig|211586.12.peg.3265"/>
<dbReference type="eggNOG" id="COG2066">
    <property type="taxonomic scope" value="Bacteria"/>
</dbReference>
<dbReference type="HOGENOM" id="CLU_027932_1_1_6"/>
<dbReference type="OrthoDB" id="9788822at2"/>
<dbReference type="PhylomeDB" id="Q8EBY0"/>
<dbReference type="BioCyc" id="SONE211586:G1GMP-3131-MONOMER"/>
<dbReference type="Proteomes" id="UP000008186">
    <property type="component" value="Chromosome"/>
</dbReference>
<dbReference type="GO" id="GO:0004359">
    <property type="term" value="F:glutaminase activity"/>
    <property type="evidence" value="ECO:0000318"/>
    <property type="project" value="GO_Central"/>
</dbReference>
<dbReference type="GO" id="GO:0006537">
    <property type="term" value="P:glutamate biosynthetic process"/>
    <property type="evidence" value="ECO:0000318"/>
    <property type="project" value="GO_Central"/>
</dbReference>
<dbReference type="GO" id="GO:0006543">
    <property type="term" value="P:glutamine catabolic process"/>
    <property type="evidence" value="ECO:0000318"/>
    <property type="project" value="GO_Central"/>
</dbReference>
<dbReference type="FunFam" id="3.40.710.10:FF:000005">
    <property type="entry name" value="Glutaminase"/>
    <property type="match status" value="1"/>
</dbReference>
<dbReference type="Gene3D" id="3.40.710.10">
    <property type="entry name" value="DD-peptidase/beta-lactamase superfamily"/>
    <property type="match status" value="1"/>
</dbReference>
<dbReference type="HAMAP" id="MF_00313">
    <property type="entry name" value="Glutaminase"/>
    <property type="match status" value="1"/>
</dbReference>
<dbReference type="InterPro" id="IPR012338">
    <property type="entry name" value="Beta-lactam/transpept-like"/>
</dbReference>
<dbReference type="InterPro" id="IPR015868">
    <property type="entry name" value="Glutaminase"/>
</dbReference>
<dbReference type="NCBIfam" id="TIGR03814">
    <property type="entry name" value="Gln_ase"/>
    <property type="match status" value="1"/>
</dbReference>
<dbReference type="NCBIfam" id="NF002132">
    <property type="entry name" value="PRK00971.1-1"/>
    <property type="match status" value="1"/>
</dbReference>
<dbReference type="NCBIfam" id="NF002133">
    <property type="entry name" value="PRK00971.1-2"/>
    <property type="match status" value="1"/>
</dbReference>
<dbReference type="PANTHER" id="PTHR12544">
    <property type="entry name" value="GLUTAMINASE"/>
    <property type="match status" value="1"/>
</dbReference>
<dbReference type="PANTHER" id="PTHR12544:SF29">
    <property type="entry name" value="GLUTAMINASE"/>
    <property type="match status" value="1"/>
</dbReference>
<dbReference type="Pfam" id="PF04960">
    <property type="entry name" value="Glutaminase"/>
    <property type="match status" value="1"/>
</dbReference>
<dbReference type="SUPFAM" id="SSF56601">
    <property type="entry name" value="beta-lactamase/transpeptidase-like"/>
    <property type="match status" value="1"/>
</dbReference>
<keyword id="KW-0378">Hydrolase</keyword>
<keyword id="KW-1185">Reference proteome</keyword>
<sequence length="304" mass="32916">MPETALLEEVVDRVRPLLGQGKVANYIPALANIDPGKLGIAVTTIDGETIGAGDYLEPFSIQSISKVFSLTLALTLYEETEIWSRVGKEPSGHSFNSLVQVELERGKPRNPFINAGALVIADLLQSRLGAPKHRMLELVRALSQNDKVCFDKQVADSEYQHSARNAAIAYLMKSFGNFQGDVDTVLRTYFHYCALKMNCADLSKAMLYLANRGKTLDGTELISQVQTRQLNALLATSGLYDGAGEFAYRVGMPGKSGVGGGIIAVIPGELSVCVWSPELDTQGNSLAGTAMLEQLSQRLGRSIF</sequence>
<feature type="chain" id="PRO_0000110623" description="Glutaminase">
    <location>
        <begin position="1"/>
        <end position="304"/>
    </location>
</feature>
<feature type="binding site" evidence="1">
    <location>
        <position position="63"/>
    </location>
    <ligand>
        <name>substrate</name>
    </ligand>
</feature>
<feature type="binding site" evidence="1">
    <location>
        <position position="114"/>
    </location>
    <ligand>
        <name>substrate</name>
    </ligand>
</feature>
<feature type="binding site" evidence="1">
    <location>
        <position position="158"/>
    </location>
    <ligand>
        <name>substrate</name>
    </ligand>
</feature>
<feature type="binding site" evidence="1">
    <location>
        <position position="165"/>
    </location>
    <ligand>
        <name>substrate</name>
    </ligand>
</feature>
<feature type="binding site" evidence="1">
    <location>
        <position position="189"/>
    </location>
    <ligand>
        <name>substrate</name>
    </ligand>
</feature>
<feature type="binding site" evidence="1">
    <location>
        <position position="240"/>
    </location>
    <ligand>
        <name>substrate</name>
    </ligand>
</feature>
<feature type="binding site" evidence="1">
    <location>
        <position position="258"/>
    </location>
    <ligand>
        <name>substrate</name>
    </ligand>
</feature>
<comment type="catalytic activity">
    <reaction evidence="1">
        <text>L-glutamine + H2O = L-glutamate + NH4(+)</text>
        <dbReference type="Rhea" id="RHEA:15889"/>
        <dbReference type="ChEBI" id="CHEBI:15377"/>
        <dbReference type="ChEBI" id="CHEBI:28938"/>
        <dbReference type="ChEBI" id="CHEBI:29985"/>
        <dbReference type="ChEBI" id="CHEBI:58359"/>
        <dbReference type="EC" id="3.5.1.2"/>
    </reaction>
</comment>
<comment type="subunit">
    <text evidence="1">Homotetramer.</text>
</comment>
<comment type="similarity">
    <text evidence="1">Belongs to the glutaminase family.</text>
</comment>